<reference key="1">
    <citation type="submission" date="2006-09" db="EMBL/GenBank/DDBJ databases">
        <title>Complete sequence of Rhodopseudomonas palustris BisA53.</title>
        <authorList>
            <consortium name="US DOE Joint Genome Institute"/>
            <person name="Copeland A."/>
            <person name="Lucas S."/>
            <person name="Lapidus A."/>
            <person name="Barry K."/>
            <person name="Detter J.C."/>
            <person name="Glavina del Rio T."/>
            <person name="Hammon N."/>
            <person name="Israni S."/>
            <person name="Dalin E."/>
            <person name="Tice H."/>
            <person name="Pitluck S."/>
            <person name="Chain P."/>
            <person name="Malfatti S."/>
            <person name="Shin M."/>
            <person name="Vergez L."/>
            <person name="Schmutz J."/>
            <person name="Larimer F."/>
            <person name="Land M."/>
            <person name="Hauser L."/>
            <person name="Pelletier D.A."/>
            <person name="Kyrpides N."/>
            <person name="Kim E."/>
            <person name="Harwood C.S."/>
            <person name="Oda Y."/>
            <person name="Richardson P."/>
        </authorList>
    </citation>
    <scope>NUCLEOTIDE SEQUENCE [LARGE SCALE GENOMIC DNA]</scope>
    <source>
        <strain>BisA53</strain>
    </source>
</reference>
<protein>
    <recommendedName>
        <fullName evidence="2">D-alanine--D-alanine ligase</fullName>
        <ecNumber evidence="2">6.3.2.4</ecNumber>
    </recommendedName>
    <alternativeName>
        <fullName evidence="2">D-Ala-D-Ala ligase</fullName>
    </alternativeName>
    <alternativeName>
        <fullName evidence="2">D-alanylalanine synthetase</fullName>
    </alternativeName>
</protein>
<evidence type="ECO:0000250" key="1"/>
<evidence type="ECO:0000255" key="2">
    <source>
        <dbReference type="HAMAP-Rule" id="MF_00047"/>
    </source>
</evidence>
<accession>Q07PS7</accession>
<feature type="chain" id="PRO_0000341166" description="D-alanine--D-alanine ligase">
    <location>
        <begin position="1"/>
        <end position="308"/>
    </location>
</feature>
<feature type="domain" description="ATP-grasp" evidence="2">
    <location>
        <begin position="103"/>
        <end position="302"/>
    </location>
</feature>
<feature type="binding site" evidence="2">
    <location>
        <begin position="130"/>
        <end position="184"/>
    </location>
    <ligand>
        <name>ATP</name>
        <dbReference type="ChEBI" id="CHEBI:30616"/>
    </ligand>
</feature>
<feature type="binding site" evidence="2">
    <location>
        <position position="252"/>
    </location>
    <ligand>
        <name>Mg(2+)</name>
        <dbReference type="ChEBI" id="CHEBI:18420"/>
        <label>1</label>
    </ligand>
</feature>
<feature type="binding site" evidence="2">
    <location>
        <position position="269"/>
    </location>
    <ligand>
        <name>Mg(2+)</name>
        <dbReference type="ChEBI" id="CHEBI:18420"/>
        <label>1</label>
    </ligand>
</feature>
<feature type="binding site" evidence="2">
    <location>
        <position position="269"/>
    </location>
    <ligand>
        <name>Mg(2+)</name>
        <dbReference type="ChEBI" id="CHEBI:18420"/>
        <label>2</label>
    </ligand>
</feature>
<feature type="binding site" evidence="2">
    <location>
        <position position="271"/>
    </location>
    <ligand>
        <name>Mg(2+)</name>
        <dbReference type="ChEBI" id="CHEBI:18420"/>
        <label>2</label>
    </ligand>
</feature>
<sequence>MTKRKHVAVLLGGWSSEREVSLRSGNACADALERRGFEVTRIDVARDIATVLDQLRPDSALMMLHGHPGEDGSIQGVLETLAIPYSHSGVLASALAMQKDLAKTVMKTAGVPVAEGLTLSRDEIARGHVMEPPYVIKPVADGSSVGVYIITEQHQHPPQELFRDDWAYGDKLLVEKYVAGKELTCAVVKGEPTDVIEIVPMVRFYDYEAKYSPGASKHVLPASLLPFVYQEVRRLTLAAHVALGCRGVSRADFRFDDRIEGTGGLVCLEVNTQPGMTETSLVPELAAYAGITFDELVQWMVEDASLDR</sequence>
<keyword id="KW-0067">ATP-binding</keyword>
<keyword id="KW-0133">Cell shape</keyword>
<keyword id="KW-0961">Cell wall biogenesis/degradation</keyword>
<keyword id="KW-0963">Cytoplasm</keyword>
<keyword id="KW-0436">Ligase</keyword>
<keyword id="KW-0460">Magnesium</keyword>
<keyword id="KW-0464">Manganese</keyword>
<keyword id="KW-0479">Metal-binding</keyword>
<keyword id="KW-0547">Nucleotide-binding</keyword>
<keyword id="KW-0573">Peptidoglycan synthesis</keyword>
<comment type="function">
    <text evidence="2">Cell wall formation.</text>
</comment>
<comment type="catalytic activity">
    <reaction evidence="2">
        <text>2 D-alanine + ATP = D-alanyl-D-alanine + ADP + phosphate + H(+)</text>
        <dbReference type="Rhea" id="RHEA:11224"/>
        <dbReference type="ChEBI" id="CHEBI:15378"/>
        <dbReference type="ChEBI" id="CHEBI:30616"/>
        <dbReference type="ChEBI" id="CHEBI:43474"/>
        <dbReference type="ChEBI" id="CHEBI:57416"/>
        <dbReference type="ChEBI" id="CHEBI:57822"/>
        <dbReference type="ChEBI" id="CHEBI:456216"/>
        <dbReference type="EC" id="6.3.2.4"/>
    </reaction>
</comment>
<comment type="cofactor">
    <cofactor evidence="1">
        <name>Mg(2+)</name>
        <dbReference type="ChEBI" id="CHEBI:18420"/>
    </cofactor>
    <cofactor evidence="1">
        <name>Mn(2+)</name>
        <dbReference type="ChEBI" id="CHEBI:29035"/>
    </cofactor>
    <text evidence="1">Binds 2 magnesium or manganese ions per subunit.</text>
</comment>
<comment type="pathway">
    <text evidence="2">Cell wall biogenesis; peptidoglycan biosynthesis.</text>
</comment>
<comment type="subcellular location">
    <subcellularLocation>
        <location evidence="2">Cytoplasm</location>
    </subcellularLocation>
</comment>
<comment type="similarity">
    <text evidence="2">Belongs to the D-alanine--D-alanine ligase family.</text>
</comment>
<name>DDL_RHOP5</name>
<gene>
    <name evidence="2" type="primary">ddl</name>
    <name type="ordered locus">RPE_2113</name>
</gene>
<proteinExistence type="inferred from homology"/>
<organism>
    <name type="scientific">Rhodopseudomonas palustris (strain BisA53)</name>
    <dbReference type="NCBI Taxonomy" id="316055"/>
    <lineage>
        <taxon>Bacteria</taxon>
        <taxon>Pseudomonadati</taxon>
        <taxon>Pseudomonadota</taxon>
        <taxon>Alphaproteobacteria</taxon>
        <taxon>Hyphomicrobiales</taxon>
        <taxon>Nitrobacteraceae</taxon>
        <taxon>Rhodopseudomonas</taxon>
    </lineage>
</organism>
<dbReference type="EC" id="6.3.2.4" evidence="2"/>
<dbReference type="EMBL" id="CP000463">
    <property type="protein sequence ID" value="ABJ06057.1"/>
    <property type="molecule type" value="Genomic_DNA"/>
</dbReference>
<dbReference type="SMR" id="Q07PS7"/>
<dbReference type="STRING" id="316055.RPE_2113"/>
<dbReference type="KEGG" id="rpe:RPE_2113"/>
<dbReference type="eggNOG" id="COG1181">
    <property type="taxonomic scope" value="Bacteria"/>
</dbReference>
<dbReference type="HOGENOM" id="CLU_039268_1_1_5"/>
<dbReference type="OrthoDB" id="9813261at2"/>
<dbReference type="UniPathway" id="UPA00219"/>
<dbReference type="GO" id="GO:0005737">
    <property type="term" value="C:cytoplasm"/>
    <property type="evidence" value="ECO:0007669"/>
    <property type="project" value="UniProtKB-SubCell"/>
</dbReference>
<dbReference type="GO" id="GO:0005524">
    <property type="term" value="F:ATP binding"/>
    <property type="evidence" value="ECO:0007669"/>
    <property type="project" value="UniProtKB-KW"/>
</dbReference>
<dbReference type="GO" id="GO:0008716">
    <property type="term" value="F:D-alanine-D-alanine ligase activity"/>
    <property type="evidence" value="ECO:0007669"/>
    <property type="project" value="UniProtKB-UniRule"/>
</dbReference>
<dbReference type="GO" id="GO:0046872">
    <property type="term" value="F:metal ion binding"/>
    <property type="evidence" value="ECO:0007669"/>
    <property type="project" value="UniProtKB-KW"/>
</dbReference>
<dbReference type="GO" id="GO:0071555">
    <property type="term" value="P:cell wall organization"/>
    <property type="evidence" value="ECO:0007669"/>
    <property type="project" value="UniProtKB-KW"/>
</dbReference>
<dbReference type="GO" id="GO:0009252">
    <property type="term" value="P:peptidoglycan biosynthetic process"/>
    <property type="evidence" value="ECO:0007669"/>
    <property type="project" value="UniProtKB-UniRule"/>
</dbReference>
<dbReference type="GO" id="GO:0008360">
    <property type="term" value="P:regulation of cell shape"/>
    <property type="evidence" value="ECO:0007669"/>
    <property type="project" value="UniProtKB-KW"/>
</dbReference>
<dbReference type="Gene3D" id="3.40.50.20">
    <property type="match status" value="1"/>
</dbReference>
<dbReference type="Gene3D" id="3.30.1490.20">
    <property type="entry name" value="ATP-grasp fold, A domain"/>
    <property type="match status" value="1"/>
</dbReference>
<dbReference type="Gene3D" id="3.30.470.20">
    <property type="entry name" value="ATP-grasp fold, B domain"/>
    <property type="match status" value="1"/>
</dbReference>
<dbReference type="HAMAP" id="MF_00047">
    <property type="entry name" value="Dala_Dala_lig"/>
    <property type="match status" value="1"/>
</dbReference>
<dbReference type="InterPro" id="IPR011761">
    <property type="entry name" value="ATP-grasp"/>
</dbReference>
<dbReference type="InterPro" id="IPR013815">
    <property type="entry name" value="ATP_grasp_subdomain_1"/>
</dbReference>
<dbReference type="InterPro" id="IPR000291">
    <property type="entry name" value="D-Ala_lig_Van_CS"/>
</dbReference>
<dbReference type="InterPro" id="IPR005905">
    <property type="entry name" value="D_ala_D_ala"/>
</dbReference>
<dbReference type="InterPro" id="IPR011095">
    <property type="entry name" value="Dala_Dala_lig_C"/>
</dbReference>
<dbReference type="InterPro" id="IPR016185">
    <property type="entry name" value="PreATP-grasp_dom_sf"/>
</dbReference>
<dbReference type="NCBIfam" id="TIGR01205">
    <property type="entry name" value="D_ala_D_alaTIGR"/>
    <property type="match status" value="1"/>
</dbReference>
<dbReference type="NCBIfam" id="NF002378">
    <property type="entry name" value="PRK01372.1"/>
    <property type="match status" value="1"/>
</dbReference>
<dbReference type="PANTHER" id="PTHR23132">
    <property type="entry name" value="D-ALANINE--D-ALANINE LIGASE"/>
    <property type="match status" value="1"/>
</dbReference>
<dbReference type="PANTHER" id="PTHR23132:SF23">
    <property type="entry name" value="D-ALANINE--D-ALANINE LIGASE B"/>
    <property type="match status" value="1"/>
</dbReference>
<dbReference type="Pfam" id="PF07478">
    <property type="entry name" value="Dala_Dala_lig_C"/>
    <property type="match status" value="1"/>
</dbReference>
<dbReference type="PIRSF" id="PIRSF039102">
    <property type="entry name" value="Ddl/VanB"/>
    <property type="match status" value="1"/>
</dbReference>
<dbReference type="SUPFAM" id="SSF56059">
    <property type="entry name" value="Glutathione synthetase ATP-binding domain-like"/>
    <property type="match status" value="1"/>
</dbReference>
<dbReference type="SUPFAM" id="SSF52440">
    <property type="entry name" value="PreATP-grasp domain"/>
    <property type="match status" value="1"/>
</dbReference>
<dbReference type="PROSITE" id="PS50975">
    <property type="entry name" value="ATP_GRASP"/>
    <property type="match status" value="1"/>
</dbReference>
<dbReference type="PROSITE" id="PS00843">
    <property type="entry name" value="DALA_DALA_LIGASE_1"/>
    <property type="match status" value="1"/>
</dbReference>
<dbReference type="PROSITE" id="PS00844">
    <property type="entry name" value="DALA_DALA_LIGASE_2"/>
    <property type="match status" value="1"/>
</dbReference>